<proteinExistence type="inferred from homology"/>
<protein>
    <recommendedName>
        <fullName evidence="1">Bifunctional protein FolD 1</fullName>
    </recommendedName>
    <domain>
        <recommendedName>
            <fullName evidence="1">Methylenetetrahydrofolate dehydrogenase</fullName>
            <ecNumber evidence="1">1.5.1.5</ecNumber>
        </recommendedName>
    </domain>
    <domain>
        <recommendedName>
            <fullName evidence="1">Methenyltetrahydrofolate cyclohydrolase</fullName>
            <ecNumber evidence="1">3.5.4.9</ecNumber>
        </recommendedName>
    </domain>
</protein>
<feature type="chain" id="PRO_0000340593" description="Bifunctional protein FolD 1">
    <location>
        <begin position="1"/>
        <end position="279"/>
    </location>
</feature>
<feature type="binding site" evidence="1">
    <location>
        <begin position="166"/>
        <end position="168"/>
    </location>
    <ligand>
        <name>NADP(+)</name>
        <dbReference type="ChEBI" id="CHEBI:58349"/>
    </ligand>
</feature>
<feature type="binding site" evidence="1">
    <location>
        <position position="191"/>
    </location>
    <ligand>
        <name>NADP(+)</name>
        <dbReference type="ChEBI" id="CHEBI:58349"/>
    </ligand>
</feature>
<comment type="function">
    <text evidence="1">Catalyzes the oxidation of 5,10-methylenetetrahydrofolate to 5,10-methenyltetrahydrofolate and then the hydrolysis of 5,10-methenyltetrahydrofolate to 10-formyltetrahydrofolate.</text>
</comment>
<comment type="catalytic activity">
    <reaction evidence="1">
        <text>(6R)-5,10-methylene-5,6,7,8-tetrahydrofolate + NADP(+) = (6R)-5,10-methenyltetrahydrofolate + NADPH</text>
        <dbReference type="Rhea" id="RHEA:22812"/>
        <dbReference type="ChEBI" id="CHEBI:15636"/>
        <dbReference type="ChEBI" id="CHEBI:57455"/>
        <dbReference type="ChEBI" id="CHEBI:57783"/>
        <dbReference type="ChEBI" id="CHEBI:58349"/>
        <dbReference type="EC" id="1.5.1.5"/>
    </reaction>
</comment>
<comment type="catalytic activity">
    <reaction evidence="1">
        <text>(6R)-5,10-methenyltetrahydrofolate + H2O = (6R)-10-formyltetrahydrofolate + H(+)</text>
        <dbReference type="Rhea" id="RHEA:23700"/>
        <dbReference type="ChEBI" id="CHEBI:15377"/>
        <dbReference type="ChEBI" id="CHEBI:15378"/>
        <dbReference type="ChEBI" id="CHEBI:57455"/>
        <dbReference type="ChEBI" id="CHEBI:195366"/>
        <dbReference type="EC" id="3.5.4.9"/>
    </reaction>
</comment>
<comment type="pathway">
    <text evidence="1">One-carbon metabolism; tetrahydrofolate interconversion.</text>
</comment>
<comment type="subunit">
    <text evidence="1">Homodimer.</text>
</comment>
<comment type="similarity">
    <text evidence="1">Belongs to the tetrahydrofolate dehydrogenase/cyclohydrolase family.</text>
</comment>
<name>FOLD1_SALAI</name>
<sequence>MTATLMDGRTLSRQLLESTAERVTGFHRSHGRRPCLATVLVGEDPASHTYVRIKVNRCTEVGIDSRRFDLPTLTTTEQLVRVLRDLSSDSAVDGILLQHPTPPQIDEHAAFEAIDPSKDVDGVTGTSFAAMAFGYRGFASCTPAAIMRLLDAYDVPLSGQRAVVVGRSAILGKPIGMLLLARDATVTYCHSRTTDLAAHVAEADLVVAAVGVPHLVRGEWIKPGAVVVDAGYNAGNVGDVQAATAANRASLITPVPGGVGPMTIAVLLAQTVDAAERHG</sequence>
<evidence type="ECO:0000255" key="1">
    <source>
        <dbReference type="HAMAP-Rule" id="MF_01576"/>
    </source>
</evidence>
<accession>A8LWI0</accession>
<keyword id="KW-0028">Amino-acid biosynthesis</keyword>
<keyword id="KW-0368">Histidine biosynthesis</keyword>
<keyword id="KW-0378">Hydrolase</keyword>
<keyword id="KW-0486">Methionine biosynthesis</keyword>
<keyword id="KW-0511">Multifunctional enzyme</keyword>
<keyword id="KW-0521">NADP</keyword>
<keyword id="KW-0554">One-carbon metabolism</keyword>
<keyword id="KW-0560">Oxidoreductase</keyword>
<keyword id="KW-0658">Purine biosynthesis</keyword>
<gene>
    <name evidence="1" type="primary">folD1</name>
    <name type="ordered locus">Sare_0067</name>
</gene>
<dbReference type="EC" id="1.5.1.5" evidence="1"/>
<dbReference type="EC" id="3.5.4.9" evidence="1"/>
<dbReference type="EMBL" id="CP000850">
    <property type="protein sequence ID" value="ABV96003.1"/>
    <property type="molecule type" value="Genomic_DNA"/>
</dbReference>
<dbReference type="SMR" id="A8LWI0"/>
<dbReference type="STRING" id="391037.Sare_0067"/>
<dbReference type="KEGG" id="saq:Sare_0067"/>
<dbReference type="PATRIC" id="fig|391037.6.peg.69"/>
<dbReference type="eggNOG" id="COG0190">
    <property type="taxonomic scope" value="Bacteria"/>
</dbReference>
<dbReference type="HOGENOM" id="CLU_034045_1_2_11"/>
<dbReference type="OrthoDB" id="9803580at2"/>
<dbReference type="UniPathway" id="UPA00193"/>
<dbReference type="GO" id="GO:0005829">
    <property type="term" value="C:cytosol"/>
    <property type="evidence" value="ECO:0007669"/>
    <property type="project" value="TreeGrafter"/>
</dbReference>
<dbReference type="GO" id="GO:0004477">
    <property type="term" value="F:methenyltetrahydrofolate cyclohydrolase activity"/>
    <property type="evidence" value="ECO:0007669"/>
    <property type="project" value="UniProtKB-UniRule"/>
</dbReference>
<dbReference type="GO" id="GO:0004488">
    <property type="term" value="F:methylenetetrahydrofolate dehydrogenase (NADP+) activity"/>
    <property type="evidence" value="ECO:0007669"/>
    <property type="project" value="UniProtKB-UniRule"/>
</dbReference>
<dbReference type="GO" id="GO:0000105">
    <property type="term" value="P:L-histidine biosynthetic process"/>
    <property type="evidence" value="ECO:0007669"/>
    <property type="project" value="UniProtKB-KW"/>
</dbReference>
<dbReference type="GO" id="GO:0009086">
    <property type="term" value="P:methionine biosynthetic process"/>
    <property type="evidence" value="ECO:0007669"/>
    <property type="project" value="UniProtKB-KW"/>
</dbReference>
<dbReference type="GO" id="GO:0006164">
    <property type="term" value="P:purine nucleotide biosynthetic process"/>
    <property type="evidence" value="ECO:0007669"/>
    <property type="project" value="UniProtKB-KW"/>
</dbReference>
<dbReference type="GO" id="GO:0035999">
    <property type="term" value="P:tetrahydrofolate interconversion"/>
    <property type="evidence" value="ECO:0007669"/>
    <property type="project" value="UniProtKB-UniRule"/>
</dbReference>
<dbReference type="CDD" id="cd01080">
    <property type="entry name" value="NAD_bind_m-THF_DH_Cyclohyd"/>
    <property type="match status" value="1"/>
</dbReference>
<dbReference type="FunFam" id="3.40.50.720:FF:000006">
    <property type="entry name" value="Bifunctional protein FolD"/>
    <property type="match status" value="1"/>
</dbReference>
<dbReference type="Gene3D" id="3.40.50.10860">
    <property type="entry name" value="Leucine Dehydrogenase, chain A, domain 1"/>
    <property type="match status" value="1"/>
</dbReference>
<dbReference type="Gene3D" id="3.40.50.720">
    <property type="entry name" value="NAD(P)-binding Rossmann-like Domain"/>
    <property type="match status" value="1"/>
</dbReference>
<dbReference type="HAMAP" id="MF_01576">
    <property type="entry name" value="THF_DHG_CYH"/>
    <property type="match status" value="1"/>
</dbReference>
<dbReference type="InterPro" id="IPR046346">
    <property type="entry name" value="Aminoacid_DH-like_N_sf"/>
</dbReference>
<dbReference type="InterPro" id="IPR036291">
    <property type="entry name" value="NAD(P)-bd_dom_sf"/>
</dbReference>
<dbReference type="InterPro" id="IPR000672">
    <property type="entry name" value="THF_DH/CycHdrlase"/>
</dbReference>
<dbReference type="InterPro" id="IPR020630">
    <property type="entry name" value="THF_DH/CycHdrlase_cat_dom"/>
</dbReference>
<dbReference type="InterPro" id="IPR020867">
    <property type="entry name" value="THF_DH/CycHdrlase_CS"/>
</dbReference>
<dbReference type="InterPro" id="IPR020631">
    <property type="entry name" value="THF_DH/CycHdrlase_NAD-bd_dom"/>
</dbReference>
<dbReference type="PANTHER" id="PTHR48099:SF5">
    <property type="entry name" value="C-1-TETRAHYDROFOLATE SYNTHASE, CYTOPLASMIC"/>
    <property type="match status" value="1"/>
</dbReference>
<dbReference type="PANTHER" id="PTHR48099">
    <property type="entry name" value="C-1-TETRAHYDROFOLATE SYNTHASE, CYTOPLASMIC-RELATED"/>
    <property type="match status" value="1"/>
</dbReference>
<dbReference type="Pfam" id="PF00763">
    <property type="entry name" value="THF_DHG_CYH"/>
    <property type="match status" value="1"/>
</dbReference>
<dbReference type="Pfam" id="PF02882">
    <property type="entry name" value="THF_DHG_CYH_C"/>
    <property type="match status" value="1"/>
</dbReference>
<dbReference type="PRINTS" id="PR00085">
    <property type="entry name" value="THFDHDRGNASE"/>
</dbReference>
<dbReference type="SUPFAM" id="SSF53223">
    <property type="entry name" value="Aminoacid dehydrogenase-like, N-terminal domain"/>
    <property type="match status" value="1"/>
</dbReference>
<dbReference type="SUPFAM" id="SSF51735">
    <property type="entry name" value="NAD(P)-binding Rossmann-fold domains"/>
    <property type="match status" value="1"/>
</dbReference>
<dbReference type="PROSITE" id="PS00767">
    <property type="entry name" value="THF_DHG_CYH_2"/>
    <property type="match status" value="1"/>
</dbReference>
<organism>
    <name type="scientific">Salinispora arenicola (strain CNS-205)</name>
    <dbReference type="NCBI Taxonomy" id="391037"/>
    <lineage>
        <taxon>Bacteria</taxon>
        <taxon>Bacillati</taxon>
        <taxon>Actinomycetota</taxon>
        <taxon>Actinomycetes</taxon>
        <taxon>Micromonosporales</taxon>
        <taxon>Micromonosporaceae</taxon>
        <taxon>Salinispora</taxon>
    </lineage>
</organism>
<reference key="1">
    <citation type="submission" date="2007-10" db="EMBL/GenBank/DDBJ databases">
        <title>Complete sequence of Salinispora arenicola CNS-205.</title>
        <authorList>
            <consortium name="US DOE Joint Genome Institute"/>
            <person name="Copeland A."/>
            <person name="Lucas S."/>
            <person name="Lapidus A."/>
            <person name="Barry K."/>
            <person name="Glavina del Rio T."/>
            <person name="Dalin E."/>
            <person name="Tice H."/>
            <person name="Pitluck S."/>
            <person name="Foster B."/>
            <person name="Schmutz J."/>
            <person name="Larimer F."/>
            <person name="Land M."/>
            <person name="Hauser L."/>
            <person name="Kyrpides N."/>
            <person name="Ivanova N."/>
            <person name="Jensen P.R."/>
            <person name="Moore B.S."/>
            <person name="Penn K."/>
            <person name="Jenkins C."/>
            <person name="Udwary D."/>
            <person name="Xiang L."/>
            <person name="Gontang E."/>
            <person name="Richardson P."/>
        </authorList>
    </citation>
    <scope>NUCLEOTIDE SEQUENCE [LARGE SCALE GENOMIC DNA]</scope>
    <source>
        <strain>CNS-205</strain>
    </source>
</reference>